<proteinExistence type="inferred from homology"/>
<organism>
    <name type="scientific">Drosophila ananassae</name>
    <name type="common">Fruit fly</name>
    <dbReference type="NCBI Taxonomy" id="7217"/>
    <lineage>
        <taxon>Eukaryota</taxon>
        <taxon>Metazoa</taxon>
        <taxon>Ecdysozoa</taxon>
        <taxon>Arthropoda</taxon>
        <taxon>Hexapoda</taxon>
        <taxon>Insecta</taxon>
        <taxon>Pterygota</taxon>
        <taxon>Neoptera</taxon>
        <taxon>Endopterygota</taxon>
        <taxon>Diptera</taxon>
        <taxon>Brachycera</taxon>
        <taxon>Muscomorpha</taxon>
        <taxon>Ephydroidea</taxon>
        <taxon>Drosophilidae</taxon>
        <taxon>Drosophila</taxon>
        <taxon>Sophophora</taxon>
    </lineage>
</organism>
<comment type="function">
    <text evidence="1">Catalyzes the interconversion of methylthioribose-1-phosphate (MTR-1-P) into methylthioribulose-1-phosphate (MTRu-1-P).</text>
</comment>
<comment type="catalytic activity">
    <reaction evidence="1">
        <text>5-(methylsulfanyl)-alpha-D-ribose 1-phosphate = 5-(methylsulfanyl)-D-ribulose 1-phosphate</text>
        <dbReference type="Rhea" id="RHEA:19989"/>
        <dbReference type="ChEBI" id="CHEBI:58533"/>
        <dbReference type="ChEBI" id="CHEBI:58548"/>
        <dbReference type="EC" id="5.3.1.23"/>
    </reaction>
</comment>
<comment type="pathway">
    <text evidence="1">Amino-acid biosynthesis; L-methionine biosynthesis via salvage pathway; L-methionine from S-methyl-5-thio-alpha-D-ribose 1-phosphate: step 1/6.</text>
</comment>
<comment type="subcellular location">
    <subcellularLocation>
        <location evidence="1">Cytoplasm</location>
    </subcellularLocation>
    <subcellularLocation>
        <location evidence="1">Nucleus</location>
    </subcellularLocation>
</comment>
<comment type="similarity">
    <text evidence="1">Belongs to the eIF-2B alpha/beta/delta subunits family. MtnA subfamily.</text>
</comment>
<name>MTNA_DROAN</name>
<protein>
    <recommendedName>
        <fullName evidence="1">Methylthioribose-1-phosphate isomerase</fullName>
        <shortName evidence="1">M1Pi</shortName>
        <shortName evidence="1">MTR-1-P isomerase</shortName>
        <ecNumber evidence="1">5.3.1.23</ecNumber>
    </recommendedName>
    <alternativeName>
        <fullName evidence="1">S-methyl-5-thioribose-1-phosphate isomerase</fullName>
    </alternativeName>
    <alternativeName>
        <fullName evidence="1">Translation initiation factor eIF-2B subunit alpha/beta/delta-like protein</fullName>
    </alternativeName>
</protein>
<keyword id="KW-0028">Amino-acid biosynthesis</keyword>
<keyword id="KW-0963">Cytoplasm</keyword>
<keyword id="KW-0413">Isomerase</keyword>
<keyword id="KW-0486">Methionine biosynthesis</keyword>
<keyword id="KW-0539">Nucleus</keyword>
<keyword id="KW-1185">Reference proteome</keyword>
<evidence type="ECO:0000255" key="1">
    <source>
        <dbReference type="HAMAP-Rule" id="MF_03119"/>
    </source>
</evidence>
<dbReference type="EC" id="5.3.1.23" evidence="1"/>
<dbReference type="EMBL" id="CH902617">
    <property type="protein sequence ID" value="EDV42055.1"/>
    <property type="molecule type" value="Genomic_DNA"/>
</dbReference>
<dbReference type="SMR" id="B3M098"/>
<dbReference type="FunCoup" id="B3M098">
    <property type="interactions" value="1599"/>
</dbReference>
<dbReference type="STRING" id="7217.B3M098"/>
<dbReference type="EnsemblMetazoa" id="FBtr0121894">
    <property type="protein sequence ID" value="FBpp0120386"/>
    <property type="gene ID" value="FBgn0094212"/>
</dbReference>
<dbReference type="EnsemblMetazoa" id="FBtr0382330">
    <property type="protein sequence ID" value="FBpp0342553"/>
    <property type="gene ID" value="FBgn0094212"/>
</dbReference>
<dbReference type="EnsemblMetazoa" id="FBtr0390174">
    <property type="protein sequence ID" value="FBpp0349719"/>
    <property type="gene ID" value="FBgn0094212"/>
</dbReference>
<dbReference type="EnsemblMetazoa" id="XM_001953458.4">
    <property type="protein sequence ID" value="XP_001953494.1"/>
    <property type="gene ID" value="LOC6499981"/>
</dbReference>
<dbReference type="EnsemblMetazoa" id="XM_014910818.3">
    <property type="protein sequence ID" value="XP_014766304.1"/>
    <property type="gene ID" value="LOC6499981"/>
</dbReference>
<dbReference type="EnsemblMetazoa" id="XM_014910819.3">
    <property type="protein sequence ID" value="XP_014766305.1"/>
    <property type="gene ID" value="LOC6499981"/>
</dbReference>
<dbReference type="EnsemblMetazoa" id="XM_032449568.2">
    <property type="protein sequence ID" value="XP_032305459.1"/>
    <property type="gene ID" value="LOC6499981"/>
</dbReference>
<dbReference type="GeneID" id="6499981"/>
<dbReference type="KEGG" id="dan:6499981"/>
<dbReference type="eggNOG" id="KOG1468">
    <property type="taxonomic scope" value="Eukaryota"/>
</dbReference>
<dbReference type="HOGENOM" id="CLU_016218_1_3_1"/>
<dbReference type="InParanoid" id="B3M098"/>
<dbReference type="OMA" id="CETRPLN"/>
<dbReference type="OrthoDB" id="2461at2759"/>
<dbReference type="PhylomeDB" id="B3M098"/>
<dbReference type="UniPathway" id="UPA00904">
    <property type="reaction ID" value="UER00874"/>
</dbReference>
<dbReference type="Proteomes" id="UP000007801">
    <property type="component" value="Unassembled WGS sequence"/>
</dbReference>
<dbReference type="GO" id="GO:0005737">
    <property type="term" value="C:cytoplasm"/>
    <property type="evidence" value="ECO:0007669"/>
    <property type="project" value="UniProtKB-SubCell"/>
</dbReference>
<dbReference type="GO" id="GO:0005634">
    <property type="term" value="C:nucleus"/>
    <property type="evidence" value="ECO:0007669"/>
    <property type="project" value="UniProtKB-SubCell"/>
</dbReference>
<dbReference type="GO" id="GO:0046523">
    <property type="term" value="F:S-methyl-5-thioribose-1-phosphate isomerase activity"/>
    <property type="evidence" value="ECO:0007669"/>
    <property type="project" value="UniProtKB-UniRule"/>
</dbReference>
<dbReference type="GO" id="GO:0019509">
    <property type="term" value="P:L-methionine salvage from methylthioadenosine"/>
    <property type="evidence" value="ECO:0007669"/>
    <property type="project" value="UniProtKB-UniRule"/>
</dbReference>
<dbReference type="FunFam" id="1.20.120.420:FF:000010">
    <property type="entry name" value="Methylthioribose-1-phosphate isomerase"/>
    <property type="match status" value="1"/>
</dbReference>
<dbReference type="FunFam" id="3.40.50.10470:FF:000003">
    <property type="entry name" value="Methylthioribose-1-phosphate isomerase"/>
    <property type="match status" value="1"/>
</dbReference>
<dbReference type="Gene3D" id="1.20.120.420">
    <property type="entry name" value="translation initiation factor eif-2b, domain 1"/>
    <property type="match status" value="1"/>
</dbReference>
<dbReference type="Gene3D" id="3.40.50.10470">
    <property type="entry name" value="Translation initiation factor eif-2b, domain 2"/>
    <property type="match status" value="1"/>
</dbReference>
<dbReference type="HAMAP" id="MF_01678">
    <property type="entry name" value="Salvage_MtnA"/>
    <property type="match status" value="1"/>
</dbReference>
<dbReference type="InterPro" id="IPR000649">
    <property type="entry name" value="IF-2B-related"/>
</dbReference>
<dbReference type="InterPro" id="IPR005251">
    <property type="entry name" value="IF-M1Pi"/>
</dbReference>
<dbReference type="InterPro" id="IPR042529">
    <property type="entry name" value="IF_2B-like_C"/>
</dbReference>
<dbReference type="InterPro" id="IPR011559">
    <property type="entry name" value="Initiation_fac_2B_a/b/d"/>
</dbReference>
<dbReference type="InterPro" id="IPR027363">
    <property type="entry name" value="M1Pi_N"/>
</dbReference>
<dbReference type="InterPro" id="IPR037171">
    <property type="entry name" value="NagB/RpiA_transferase-like"/>
</dbReference>
<dbReference type="NCBIfam" id="TIGR00524">
    <property type="entry name" value="eIF-2B_rel"/>
    <property type="match status" value="1"/>
</dbReference>
<dbReference type="NCBIfam" id="NF004326">
    <property type="entry name" value="PRK05720.1"/>
    <property type="match status" value="1"/>
</dbReference>
<dbReference type="NCBIfam" id="TIGR00512">
    <property type="entry name" value="salvage_mtnA"/>
    <property type="match status" value="1"/>
</dbReference>
<dbReference type="PANTHER" id="PTHR43475">
    <property type="entry name" value="METHYLTHIORIBOSE-1-PHOSPHATE ISOMERASE"/>
    <property type="match status" value="1"/>
</dbReference>
<dbReference type="PANTHER" id="PTHR43475:SF1">
    <property type="entry name" value="METHYLTHIORIBOSE-1-PHOSPHATE ISOMERASE"/>
    <property type="match status" value="1"/>
</dbReference>
<dbReference type="Pfam" id="PF01008">
    <property type="entry name" value="IF-2B"/>
    <property type="match status" value="1"/>
</dbReference>
<dbReference type="SUPFAM" id="SSF100950">
    <property type="entry name" value="NagB/RpiA/CoA transferase-like"/>
    <property type="match status" value="1"/>
</dbReference>
<accession>B3M098</accession>
<feature type="chain" id="PRO_0000401975" description="Methylthioribose-1-phosphate isomerase">
    <location>
        <begin position="1"/>
        <end position="364"/>
    </location>
</feature>
<feature type="active site" description="Proton donor" evidence="1">
    <location>
        <position position="254"/>
    </location>
</feature>
<feature type="site" description="Transition state stabilizer" evidence="1">
    <location>
        <position position="174"/>
    </location>
</feature>
<gene>
    <name type="ORF">GF17194</name>
</gene>
<sequence length="364" mass="39093">MSLQSIKYSRGSLDILDQLLLPVQSKYVAVRGVEDGWKVINKMQVRGAPAIAIVGCLSLAVEIYPEEFESKKRLRQEVEGKLNYLVSARPTAVNMKIAADELLALANDLTKDETIDVAGMKERFLNATEAMLEKDIADNQAIGSHGAQAILKRVAEAAGAQTGTAGPVRVLTHCNTGSLATAGYGTALGVVRQLAELGKLEHVYCTETRPYNQGARLTAYELVHEKFPATLVLDSMVAALLRAKNVAGVVVGADRVAANGDTANKIGTYQIAVVAKHHGVPFYVAAPLTSIDLAIPGGDHIIIEERPDREMTHVGEHRIAAPGINCWNPAFDVTPASLITGIITERGVFKPEELKEAITKLLES</sequence>
<reference key="1">
    <citation type="journal article" date="2007" name="Nature">
        <title>Evolution of genes and genomes on the Drosophila phylogeny.</title>
        <authorList>
            <consortium name="Drosophila 12 genomes consortium"/>
        </authorList>
    </citation>
    <scope>NUCLEOTIDE SEQUENCE [LARGE SCALE GENOMIC DNA]</scope>
    <source>
        <strain>Tucson 14024-0371.13</strain>
    </source>
</reference>